<comment type="function">
    <text evidence="1">Attaches a formyl group to the free amino group of methionyl-tRNA(fMet). The formyl group appears to play a dual role in the initiator identity of N-formylmethionyl-tRNA by promoting its recognition by IF2 and preventing the misappropriation of this tRNA by the elongation apparatus.</text>
</comment>
<comment type="catalytic activity">
    <reaction evidence="1">
        <text>L-methionyl-tRNA(fMet) + (6R)-10-formyltetrahydrofolate = N-formyl-L-methionyl-tRNA(fMet) + (6S)-5,6,7,8-tetrahydrofolate + H(+)</text>
        <dbReference type="Rhea" id="RHEA:24380"/>
        <dbReference type="Rhea" id="RHEA-COMP:9952"/>
        <dbReference type="Rhea" id="RHEA-COMP:9953"/>
        <dbReference type="ChEBI" id="CHEBI:15378"/>
        <dbReference type="ChEBI" id="CHEBI:57453"/>
        <dbReference type="ChEBI" id="CHEBI:78530"/>
        <dbReference type="ChEBI" id="CHEBI:78844"/>
        <dbReference type="ChEBI" id="CHEBI:195366"/>
        <dbReference type="EC" id="2.1.2.9"/>
    </reaction>
</comment>
<comment type="similarity">
    <text evidence="1">Belongs to the Fmt family.</text>
</comment>
<reference key="1">
    <citation type="submission" date="2007-05" db="EMBL/GenBank/DDBJ databases">
        <title>Complete sequence of Thermosipho melanesiensis BI429.</title>
        <authorList>
            <consortium name="US DOE Joint Genome Institute"/>
            <person name="Copeland A."/>
            <person name="Lucas S."/>
            <person name="Lapidus A."/>
            <person name="Barry K."/>
            <person name="Glavina del Rio T."/>
            <person name="Dalin E."/>
            <person name="Tice H."/>
            <person name="Pitluck S."/>
            <person name="Chertkov O."/>
            <person name="Brettin T."/>
            <person name="Bruce D."/>
            <person name="Detter J.C."/>
            <person name="Han C."/>
            <person name="Schmutz J."/>
            <person name="Larimer F."/>
            <person name="Land M."/>
            <person name="Hauser L."/>
            <person name="Kyrpides N."/>
            <person name="Mikhailova N."/>
            <person name="Nelson K."/>
            <person name="Gogarten J.P."/>
            <person name="Noll K."/>
            <person name="Richardson P."/>
        </authorList>
    </citation>
    <scope>NUCLEOTIDE SEQUENCE [LARGE SCALE GENOMIC DNA]</scope>
    <source>
        <strain>DSM 12029 / CIP 104789 / BI429</strain>
    </source>
</reference>
<gene>
    <name evidence="1" type="primary">fmt</name>
    <name type="ordered locus">Tmel_0236</name>
</gene>
<feature type="chain" id="PRO_1000020196" description="Methionyl-tRNA formyltransferase">
    <location>
        <begin position="1"/>
        <end position="303"/>
    </location>
</feature>
<feature type="binding site" evidence="1">
    <location>
        <begin position="106"/>
        <end position="109"/>
    </location>
    <ligand>
        <name>(6S)-5,6,7,8-tetrahydrofolate</name>
        <dbReference type="ChEBI" id="CHEBI:57453"/>
    </ligand>
</feature>
<name>FMT_THEM4</name>
<evidence type="ECO:0000255" key="1">
    <source>
        <dbReference type="HAMAP-Rule" id="MF_00182"/>
    </source>
</evidence>
<proteinExistence type="inferred from homology"/>
<accession>A6LJK9</accession>
<protein>
    <recommendedName>
        <fullName evidence="1">Methionyl-tRNA formyltransferase</fullName>
        <ecNumber evidence="1">2.1.2.9</ecNumber>
    </recommendedName>
</protein>
<organism>
    <name type="scientific">Thermosipho melanesiensis (strain DSM 12029 / CIP 104789 / BI429)</name>
    <dbReference type="NCBI Taxonomy" id="391009"/>
    <lineage>
        <taxon>Bacteria</taxon>
        <taxon>Thermotogati</taxon>
        <taxon>Thermotogota</taxon>
        <taxon>Thermotogae</taxon>
        <taxon>Thermotogales</taxon>
        <taxon>Fervidobacteriaceae</taxon>
        <taxon>Thermosipho</taxon>
    </lineage>
</organism>
<keyword id="KW-0648">Protein biosynthesis</keyword>
<keyword id="KW-0808">Transferase</keyword>
<dbReference type="EC" id="2.1.2.9" evidence="1"/>
<dbReference type="EMBL" id="CP000716">
    <property type="protein sequence ID" value="ABR30110.1"/>
    <property type="molecule type" value="Genomic_DNA"/>
</dbReference>
<dbReference type="RefSeq" id="WP_012056471.1">
    <property type="nucleotide sequence ID" value="NC_009616.1"/>
</dbReference>
<dbReference type="SMR" id="A6LJK9"/>
<dbReference type="STRING" id="391009.Tmel_0236"/>
<dbReference type="KEGG" id="tme:Tmel_0236"/>
<dbReference type="eggNOG" id="COG0223">
    <property type="taxonomic scope" value="Bacteria"/>
</dbReference>
<dbReference type="HOGENOM" id="CLU_033347_1_1_0"/>
<dbReference type="OrthoDB" id="9802815at2"/>
<dbReference type="Proteomes" id="UP000001110">
    <property type="component" value="Chromosome"/>
</dbReference>
<dbReference type="GO" id="GO:0005829">
    <property type="term" value="C:cytosol"/>
    <property type="evidence" value="ECO:0007669"/>
    <property type="project" value="TreeGrafter"/>
</dbReference>
<dbReference type="GO" id="GO:0004479">
    <property type="term" value="F:methionyl-tRNA formyltransferase activity"/>
    <property type="evidence" value="ECO:0007669"/>
    <property type="project" value="UniProtKB-UniRule"/>
</dbReference>
<dbReference type="CDD" id="cd08646">
    <property type="entry name" value="FMT_core_Met-tRNA-FMT_N"/>
    <property type="match status" value="1"/>
</dbReference>
<dbReference type="CDD" id="cd08704">
    <property type="entry name" value="Met_tRNA_FMT_C"/>
    <property type="match status" value="1"/>
</dbReference>
<dbReference type="Gene3D" id="3.40.50.12230">
    <property type="match status" value="1"/>
</dbReference>
<dbReference type="HAMAP" id="MF_00182">
    <property type="entry name" value="Formyl_trans"/>
    <property type="match status" value="1"/>
</dbReference>
<dbReference type="InterPro" id="IPR005794">
    <property type="entry name" value="Fmt"/>
</dbReference>
<dbReference type="InterPro" id="IPR005793">
    <property type="entry name" value="Formyl_trans_C"/>
</dbReference>
<dbReference type="InterPro" id="IPR002376">
    <property type="entry name" value="Formyl_transf_N"/>
</dbReference>
<dbReference type="InterPro" id="IPR036477">
    <property type="entry name" value="Formyl_transf_N_sf"/>
</dbReference>
<dbReference type="InterPro" id="IPR011034">
    <property type="entry name" value="Formyl_transferase-like_C_sf"/>
</dbReference>
<dbReference type="InterPro" id="IPR044135">
    <property type="entry name" value="Met-tRNA-FMT_C"/>
</dbReference>
<dbReference type="InterPro" id="IPR041711">
    <property type="entry name" value="Met-tRNA-FMT_N"/>
</dbReference>
<dbReference type="NCBIfam" id="TIGR00460">
    <property type="entry name" value="fmt"/>
    <property type="match status" value="1"/>
</dbReference>
<dbReference type="PANTHER" id="PTHR11138">
    <property type="entry name" value="METHIONYL-TRNA FORMYLTRANSFERASE"/>
    <property type="match status" value="1"/>
</dbReference>
<dbReference type="PANTHER" id="PTHR11138:SF5">
    <property type="entry name" value="METHIONYL-TRNA FORMYLTRANSFERASE, MITOCHONDRIAL"/>
    <property type="match status" value="1"/>
</dbReference>
<dbReference type="Pfam" id="PF02911">
    <property type="entry name" value="Formyl_trans_C"/>
    <property type="match status" value="1"/>
</dbReference>
<dbReference type="Pfam" id="PF00551">
    <property type="entry name" value="Formyl_trans_N"/>
    <property type="match status" value="1"/>
</dbReference>
<dbReference type="SUPFAM" id="SSF50486">
    <property type="entry name" value="FMT C-terminal domain-like"/>
    <property type="match status" value="1"/>
</dbReference>
<dbReference type="SUPFAM" id="SSF53328">
    <property type="entry name" value="Formyltransferase"/>
    <property type="match status" value="1"/>
</dbReference>
<sequence>MRILFLGTPDFASVHLEFLMKNGFDVVAVISQPDKPKGRGKKILPTPVKEVALKYNIPVFQPKKLNKEGLKIIENLKPDIGIVVAYGKLLKPPFLNTLEFYNVHASLLPSYRGAAPIQRVLENGEKRTGITIFKIGEGMDDGPIALKKEVEVGEFETFGELYEKLLDLGKKALIEFLNNYPIELIPQEGKVSFAPKITKEDLKLDFSKDVTFVKNKIRAYDPLPGVRVLFKRKIVKLFGVFSVLENSSREIGKIISIDKEGALISCENGSVKVRYIQFPGKRKMTFFEAKNGCLIKEGECFDC</sequence>